<accession>Q8ZYH0</accession>
<organism>
    <name type="scientific">Pyrobaculum aerophilum (strain ATCC 51768 / DSM 7523 / JCM 9630 / CIP 104966 / NBRC 100827 / IM2)</name>
    <dbReference type="NCBI Taxonomy" id="178306"/>
    <lineage>
        <taxon>Archaea</taxon>
        <taxon>Thermoproteota</taxon>
        <taxon>Thermoprotei</taxon>
        <taxon>Thermoproteales</taxon>
        <taxon>Thermoproteaceae</taxon>
        <taxon>Pyrobaculum</taxon>
    </lineage>
</organism>
<feature type="chain" id="PRO_0000326615" description="Transcription factor E">
    <location>
        <begin position="1"/>
        <end position="170"/>
    </location>
</feature>
<feature type="domain" description="HTH TFE/IIEalpha-type" evidence="1">
    <location>
        <begin position="1"/>
        <end position="93"/>
    </location>
</feature>
<keyword id="KW-0238">DNA-binding</keyword>
<keyword id="KW-1185">Reference proteome</keyword>
<keyword id="KW-0804">Transcription</keyword>
<keyword id="KW-0805">Transcription regulation</keyword>
<evidence type="ECO:0000255" key="1">
    <source>
        <dbReference type="HAMAP-Rule" id="MF_01909"/>
    </source>
</evidence>
<name>TFE_PYRAE</name>
<reference key="1">
    <citation type="journal article" date="2002" name="Proc. Natl. Acad. Sci. U.S.A.">
        <title>Genome sequence of the hyperthermophilic crenarchaeon Pyrobaculum aerophilum.</title>
        <authorList>
            <person name="Fitz-Gibbon S.T."/>
            <person name="Ladner H."/>
            <person name="Kim U.-J."/>
            <person name="Stetter K.O."/>
            <person name="Simon M.I."/>
            <person name="Miller J.H."/>
        </authorList>
    </citation>
    <scope>NUCLEOTIDE SEQUENCE [LARGE SCALE GENOMIC DNA]</scope>
    <source>
        <strain>ATCC 51768 / DSM 7523 / JCM 9630 / CIP 104966 / NBRC 100827 / IM2</strain>
    </source>
</reference>
<gene>
    <name evidence="1" type="primary">tfe</name>
    <name type="ordered locus">PAE0781</name>
</gene>
<proteinExistence type="inferred from homology"/>
<comment type="function">
    <text evidence="1">Transcription factor that plays a role in the activation of archaeal genes transcribed by RNA polymerase. Facilitates transcription initiation by enhancing TATA-box recognition by TATA-box-binding protein (Tbp), and transcription factor B (Tfb) and RNA polymerase recruitment. Not absolutely required for transcription in vitro, but particularly important in cases where Tbp or Tfb function is not optimal. It dynamically alters the nucleic acid-binding properties of RNA polymerases by stabilizing the initiation complex and destabilizing elongation complexes. Seems to translocate with the RNA polymerase following initiation and acts by binding to the non template strand of the transcription bubble in elongation complexes.</text>
</comment>
<comment type="subunit">
    <text evidence="1">Monomer. Interaction with RNA polymerase subunits RpoF and RpoE is necessary for Tfe stimulatory transcription activity. Able to interact with Tbp and RNA polymerase in the absence of DNA promoter. Interacts both with the preinitiation and elongation complexes.</text>
</comment>
<comment type="domain">
    <text evidence="1">The winged helix domain is involved in binding to DNA in the preinitiation complex.</text>
</comment>
<comment type="similarity">
    <text evidence="1">Belongs to the TFE family.</text>
</comment>
<dbReference type="EMBL" id="AE009441">
    <property type="protein sequence ID" value="AAL63023.1"/>
    <property type="molecule type" value="Genomic_DNA"/>
</dbReference>
<dbReference type="RefSeq" id="WP_011007495.1">
    <property type="nucleotide sequence ID" value="NC_003364.1"/>
</dbReference>
<dbReference type="SMR" id="Q8ZYH0"/>
<dbReference type="STRING" id="178306.PAE0781"/>
<dbReference type="EnsemblBacteria" id="AAL63023">
    <property type="protein sequence ID" value="AAL63023"/>
    <property type="gene ID" value="PAE0781"/>
</dbReference>
<dbReference type="GeneID" id="1465251"/>
<dbReference type="KEGG" id="pai:PAE0781"/>
<dbReference type="PATRIC" id="fig|178306.9.peg.570"/>
<dbReference type="eggNOG" id="arCOG04270">
    <property type="taxonomic scope" value="Archaea"/>
</dbReference>
<dbReference type="HOGENOM" id="CLU_100097_1_0_2"/>
<dbReference type="InParanoid" id="Q8ZYH0"/>
<dbReference type="Proteomes" id="UP000002439">
    <property type="component" value="Chromosome"/>
</dbReference>
<dbReference type="GO" id="GO:0003677">
    <property type="term" value="F:DNA binding"/>
    <property type="evidence" value="ECO:0007669"/>
    <property type="project" value="UniProtKB-KW"/>
</dbReference>
<dbReference type="GO" id="GO:0006355">
    <property type="term" value="P:regulation of DNA-templated transcription"/>
    <property type="evidence" value="ECO:0007669"/>
    <property type="project" value="InterPro"/>
</dbReference>
<dbReference type="GO" id="GO:0006367">
    <property type="term" value="P:transcription initiation at RNA polymerase II promoter"/>
    <property type="evidence" value="ECO:0007669"/>
    <property type="project" value="InterPro"/>
</dbReference>
<dbReference type="Gene3D" id="1.10.10.10">
    <property type="entry name" value="Winged helix-like DNA-binding domain superfamily/Winged helix DNA-binding domain"/>
    <property type="match status" value="1"/>
</dbReference>
<dbReference type="HAMAP" id="MF_01909">
    <property type="entry name" value="TFE_arch"/>
    <property type="match status" value="1"/>
</dbReference>
<dbReference type="InterPro" id="IPR016481">
    <property type="entry name" value="TF_E_archaea"/>
</dbReference>
<dbReference type="InterPro" id="IPR017919">
    <property type="entry name" value="TFIIE/TFIIEa_HTH"/>
</dbReference>
<dbReference type="InterPro" id="IPR002853">
    <property type="entry name" value="TFIIE_asu"/>
</dbReference>
<dbReference type="InterPro" id="IPR024550">
    <property type="entry name" value="TFIIEa/SarR/Rpc3_HTH_dom"/>
</dbReference>
<dbReference type="InterPro" id="IPR036388">
    <property type="entry name" value="WH-like_DNA-bd_sf"/>
</dbReference>
<dbReference type="InterPro" id="IPR036390">
    <property type="entry name" value="WH_DNA-bd_sf"/>
</dbReference>
<dbReference type="Pfam" id="PF02002">
    <property type="entry name" value="TFIIE_alpha"/>
    <property type="match status" value="1"/>
</dbReference>
<dbReference type="PIRSF" id="PIRSF006373">
    <property type="entry name" value="TF_E_archaea"/>
    <property type="match status" value="1"/>
</dbReference>
<dbReference type="SMART" id="SM00531">
    <property type="entry name" value="TFIIE"/>
    <property type="match status" value="1"/>
</dbReference>
<dbReference type="SUPFAM" id="SSF46785">
    <property type="entry name" value="Winged helix' DNA-binding domain"/>
    <property type="match status" value="1"/>
</dbReference>
<dbReference type="PROSITE" id="PS51344">
    <property type="entry name" value="HTH_TFE_IIE"/>
    <property type="match status" value="1"/>
</dbReference>
<sequence length="170" mass="19858">MKDVYLYIVEKSVAWEFDSPEYGRLARKVAEMLYERKEDLTDDRIAILLNISTAETRRILQYLMRLNLVGVKKRTTEDYRIEYTWYVDDEIIKQAIGGRARTAREKISMLIRALTEGSYYICPNCHMRYSLDEAVNKGGVCPVCGAELEYVESLEEINKLTKVLQKLEKL</sequence>
<protein>
    <recommendedName>
        <fullName evidence="1">Transcription factor E</fullName>
        <shortName evidence="1">TFE</shortName>
    </recommendedName>
    <alternativeName>
        <fullName evidence="1">TFIIE subunit alpha homolog</fullName>
    </alternativeName>
    <alternativeName>
        <fullName evidence="1">Transcription initiation factor TFIIE</fullName>
    </alternativeName>
</protein>